<proteinExistence type="inferred from homology"/>
<feature type="chain" id="PRO_1000140777" description="Small ribosomal subunit protein uS4">
    <location>
        <begin position="1"/>
        <end position="206"/>
    </location>
</feature>
<feature type="domain" description="S4 RNA-binding" evidence="1">
    <location>
        <begin position="96"/>
        <end position="156"/>
    </location>
</feature>
<keyword id="KW-0687">Ribonucleoprotein</keyword>
<keyword id="KW-0689">Ribosomal protein</keyword>
<keyword id="KW-0694">RNA-binding</keyword>
<keyword id="KW-0699">rRNA-binding</keyword>
<protein>
    <recommendedName>
        <fullName evidence="1">Small ribosomal subunit protein uS4</fullName>
    </recommendedName>
    <alternativeName>
        <fullName evidence="2">30S ribosomal protein S4</fullName>
    </alternativeName>
</protein>
<name>RS4_PSEA8</name>
<gene>
    <name evidence="1" type="primary">rpsD</name>
    <name type="ordered locus">PLES_06881</name>
</gene>
<sequence>MARYIGPKCKLSRREGTDLFLKSGARALDSKCKAENVPGQHGQRRGRLSDYGLQLREKQKVRRIYGVLERQFRGYYQEASRRKGSTGENLLQLLECRLDNVVYRMGFGSTRSESRQLVSHKAITVNGQTVNIPSYQVKAGDVVAVREKSKNQLRIAQALELCGQRGRVEWVEVDLDKKAGTFKSAPARSDLSADINENLIVELYSK</sequence>
<reference key="1">
    <citation type="journal article" date="2009" name="Genome Res.">
        <title>Newly introduced genomic prophage islands are critical determinants of in vivo competitiveness in the Liverpool epidemic strain of Pseudomonas aeruginosa.</title>
        <authorList>
            <person name="Winstanley C."/>
            <person name="Langille M.G.I."/>
            <person name="Fothergill J.L."/>
            <person name="Kukavica-Ibrulj I."/>
            <person name="Paradis-Bleau C."/>
            <person name="Sanschagrin F."/>
            <person name="Thomson N.R."/>
            <person name="Winsor G.L."/>
            <person name="Quail M.A."/>
            <person name="Lennard N."/>
            <person name="Bignell A."/>
            <person name="Clarke L."/>
            <person name="Seeger K."/>
            <person name="Saunders D."/>
            <person name="Harris D."/>
            <person name="Parkhill J."/>
            <person name="Hancock R.E.W."/>
            <person name="Brinkman F.S.L."/>
            <person name="Levesque R.C."/>
        </authorList>
    </citation>
    <scope>NUCLEOTIDE SEQUENCE [LARGE SCALE GENOMIC DNA]</scope>
    <source>
        <strain>LESB58</strain>
    </source>
</reference>
<organism>
    <name type="scientific">Pseudomonas aeruginosa (strain LESB58)</name>
    <dbReference type="NCBI Taxonomy" id="557722"/>
    <lineage>
        <taxon>Bacteria</taxon>
        <taxon>Pseudomonadati</taxon>
        <taxon>Pseudomonadota</taxon>
        <taxon>Gammaproteobacteria</taxon>
        <taxon>Pseudomonadales</taxon>
        <taxon>Pseudomonadaceae</taxon>
        <taxon>Pseudomonas</taxon>
    </lineage>
</organism>
<evidence type="ECO:0000255" key="1">
    <source>
        <dbReference type="HAMAP-Rule" id="MF_01306"/>
    </source>
</evidence>
<evidence type="ECO:0000305" key="2"/>
<accession>B7V667</accession>
<dbReference type="EMBL" id="FM209186">
    <property type="protein sequence ID" value="CAW25415.1"/>
    <property type="molecule type" value="Genomic_DNA"/>
</dbReference>
<dbReference type="RefSeq" id="WP_003093678.1">
    <property type="nucleotide sequence ID" value="NC_011770.1"/>
</dbReference>
<dbReference type="SMR" id="B7V667"/>
<dbReference type="KEGG" id="pag:PLES_06881"/>
<dbReference type="HOGENOM" id="CLU_092403_0_2_6"/>
<dbReference type="GO" id="GO:0015935">
    <property type="term" value="C:small ribosomal subunit"/>
    <property type="evidence" value="ECO:0007669"/>
    <property type="project" value="InterPro"/>
</dbReference>
<dbReference type="GO" id="GO:0019843">
    <property type="term" value="F:rRNA binding"/>
    <property type="evidence" value="ECO:0007669"/>
    <property type="project" value="UniProtKB-UniRule"/>
</dbReference>
<dbReference type="GO" id="GO:0003735">
    <property type="term" value="F:structural constituent of ribosome"/>
    <property type="evidence" value="ECO:0007669"/>
    <property type="project" value="InterPro"/>
</dbReference>
<dbReference type="GO" id="GO:0042274">
    <property type="term" value="P:ribosomal small subunit biogenesis"/>
    <property type="evidence" value="ECO:0007669"/>
    <property type="project" value="TreeGrafter"/>
</dbReference>
<dbReference type="GO" id="GO:0006412">
    <property type="term" value="P:translation"/>
    <property type="evidence" value="ECO:0007669"/>
    <property type="project" value="UniProtKB-UniRule"/>
</dbReference>
<dbReference type="CDD" id="cd00165">
    <property type="entry name" value="S4"/>
    <property type="match status" value="1"/>
</dbReference>
<dbReference type="FunFam" id="1.10.1050.10:FF:000001">
    <property type="entry name" value="30S ribosomal protein S4"/>
    <property type="match status" value="1"/>
</dbReference>
<dbReference type="FunFam" id="3.10.290.10:FF:000001">
    <property type="entry name" value="30S ribosomal protein S4"/>
    <property type="match status" value="1"/>
</dbReference>
<dbReference type="Gene3D" id="1.10.1050.10">
    <property type="entry name" value="Ribosomal Protein S4 Delta 41, Chain A, domain 1"/>
    <property type="match status" value="1"/>
</dbReference>
<dbReference type="Gene3D" id="3.10.290.10">
    <property type="entry name" value="RNA-binding S4 domain"/>
    <property type="match status" value="1"/>
</dbReference>
<dbReference type="HAMAP" id="MF_01306_B">
    <property type="entry name" value="Ribosomal_uS4_B"/>
    <property type="match status" value="1"/>
</dbReference>
<dbReference type="InterPro" id="IPR022801">
    <property type="entry name" value="Ribosomal_uS4"/>
</dbReference>
<dbReference type="InterPro" id="IPR005709">
    <property type="entry name" value="Ribosomal_uS4_bac-type"/>
</dbReference>
<dbReference type="InterPro" id="IPR018079">
    <property type="entry name" value="Ribosomal_uS4_CS"/>
</dbReference>
<dbReference type="InterPro" id="IPR001912">
    <property type="entry name" value="Ribosomal_uS4_N"/>
</dbReference>
<dbReference type="InterPro" id="IPR002942">
    <property type="entry name" value="S4_RNA-bd"/>
</dbReference>
<dbReference type="InterPro" id="IPR036986">
    <property type="entry name" value="S4_RNA-bd_sf"/>
</dbReference>
<dbReference type="NCBIfam" id="NF003717">
    <property type="entry name" value="PRK05327.1"/>
    <property type="match status" value="1"/>
</dbReference>
<dbReference type="NCBIfam" id="TIGR01017">
    <property type="entry name" value="rpsD_bact"/>
    <property type="match status" value="1"/>
</dbReference>
<dbReference type="PANTHER" id="PTHR11831">
    <property type="entry name" value="30S 40S RIBOSOMAL PROTEIN"/>
    <property type="match status" value="1"/>
</dbReference>
<dbReference type="PANTHER" id="PTHR11831:SF4">
    <property type="entry name" value="SMALL RIBOSOMAL SUBUNIT PROTEIN US4M"/>
    <property type="match status" value="1"/>
</dbReference>
<dbReference type="Pfam" id="PF00163">
    <property type="entry name" value="Ribosomal_S4"/>
    <property type="match status" value="1"/>
</dbReference>
<dbReference type="Pfam" id="PF01479">
    <property type="entry name" value="S4"/>
    <property type="match status" value="1"/>
</dbReference>
<dbReference type="SMART" id="SM01390">
    <property type="entry name" value="Ribosomal_S4"/>
    <property type="match status" value="1"/>
</dbReference>
<dbReference type="SMART" id="SM00363">
    <property type="entry name" value="S4"/>
    <property type="match status" value="1"/>
</dbReference>
<dbReference type="SUPFAM" id="SSF55174">
    <property type="entry name" value="Alpha-L RNA-binding motif"/>
    <property type="match status" value="1"/>
</dbReference>
<dbReference type="PROSITE" id="PS00632">
    <property type="entry name" value="RIBOSOMAL_S4"/>
    <property type="match status" value="1"/>
</dbReference>
<dbReference type="PROSITE" id="PS50889">
    <property type="entry name" value="S4"/>
    <property type="match status" value="1"/>
</dbReference>
<comment type="function">
    <text evidence="1">One of the primary rRNA binding proteins, it binds directly to 16S rRNA where it nucleates assembly of the body of the 30S subunit.</text>
</comment>
<comment type="function">
    <text evidence="1">With S5 and S12 plays an important role in translational accuracy.</text>
</comment>
<comment type="subunit">
    <text evidence="1">Part of the 30S ribosomal subunit. Contacts protein S5. The interaction surface between S4 and S5 is involved in control of translational fidelity.</text>
</comment>
<comment type="similarity">
    <text evidence="1">Belongs to the universal ribosomal protein uS4 family.</text>
</comment>